<accession>Q8IPK4</accession>
<accession>A9UNF8</accession>
<reference key="1">
    <citation type="journal article" date="2000" name="Science">
        <title>The genome sequence of Drosophila melanogaster.</title>
        <authorList>
            <person name="Adams M.D."/>
            <person name="Celniker S.E."/>
            <person name="Holt R.A."/>
            <person name="Evans C.A."/>
            <person name="Gocayne J.D."/>
            <person name="Amanatides P.G."/>
            <person name="Scherer S.E."/>
            <person name="Li P.W."/>
            <person name="Hoskins R.A."/>
            <person name="Galle R.F."/>
            <person name="George R.A."/>
            <person name="Lewis S.E."/>
            <person name="Richards S."/>
            <person name="Ashburner M."/>
            <person name="Henderson S.N."/>
            <person name="Sutton G.G."/>
            <person name="Wortman J.R."/>
            <person name="Yandell M.D."/>
            <person name="Zhang Q."/>
            <person name="Chen L.X."/>
            <person name="Brandon R.C."/>
            <person name="Rogers Y.-H.C."/>
            <person name="Blazej R.G."/>
            <person name="Champe M."/>
            <person name="Pfeiffer B.D."/>
            <person name="Wan K.H."/>
            <person name="Doyle C."/>
            <person name="Baxter E.G."/>
            <person name="Helt G."/>
            <person name="Nelson C.R."/>
            <person name="Miklos G.L.G."/>
            <person name="Abril J.F."/>
            <person name="Agbayani A."/>
            <person name="An H.-J."/>
            <person name="Andrews-Pfannkoch C."/>
            <person name="Baldwin D."/>
            <person name="Ballew R.M."/>
            <person name="Basu A."/>
            <person name="Baxendale J."/>
            <person name="Bayraktaroglu L."/>
            <person name="Beasley E.M."/>
            <person name="Beeson K.Y."/>
            <person name="Benos P.V."/>
            <person name="Berman B.P."/>
            <person name="Bhandari D."/>
            <person name="Bolshakov S."/>
            <person name="Borkova D."/>
            <person name="Botchan M.R."/>
            <person name="Bouck J."/>
            <person name="Brokstein P."/>
            <person name="Brottier P."/>
            <person name="Burtis K.C."/>
            <person name="Busam D.A."/>
            <person name="Butler H."/>
            <person name="Cadieu E."/>
            <person name="Center A."/>
            <person name="Chandra I."/>
            <person name="Cherry J.M."/>
            <person name="Cawley S."/>
            <person name="Dahlke C."/>
            <person name="Davenport L.B."/>
            <person name="Davies P."/>
            <person name="de Pablos B."/>
            <person name="Delcher A."/>
            <person name="Deng Z."/>
            <person name="Mays A.D."/>
            <person name="Dew I."/>
            <person name="Dietz S.M."/>
            <person name="Dodson K."/>
            <person name="Doup L.E."/>
            <person name="Downes M."/>
            <person name="Dugan-Rocha S."/>
            <person name="Dunkov B.C."/>
            <person name="Dunn P."/>
            <person name="Durbin K.J."/>
            <person name="Evangelista C.C."/>
            <person name="Ferraz C."/>
            <person name="Ferriera S."/>
            <person name="Fleischmann W."/>
            <person name="Fosler C."/>
            <person name="Gabrielian A.E."/>
            <person name="Garg N.S."/>
            <person name="Gelbart W.M."/>
            <person name="Glasser K."/>
            <person name="Glodek A."/>
            <person name="Gong F."/>
            <person name="Gorrell J.H."/>
            <person name="Gu Z."/>
            <person name="Guan P."/>
            <person name="Harris M."/>
            <person name="Harris N.L."/>
            <person name="Harvey D.A."/>
            <person name="Heiman T.J."/>
            <person name="Hernandez J.R."/>
            <person name="Houck J."/>
            <person name="Hostin D."/>
            <person name="Houston K.A."/>
            <person name="Howland T.J."/>
            <person name="Wei M.-H."/>
            <person name="Ibegwam C."/>
            <person name="Jalali M."/>
            <person name="Kalush F."/>
            <person name="Karpen G.H."/>
            <person name="Ke Z."/>
            <person name="Kennison J.A."/>
            <person name="Ketchum K.A."/>
            <person name="Kimmel B.E."/>
            <person name="Kodira C.D."/>
            <person name="Kraft C.L."/>
            <person name="Kravitz S."/>
            <person name="Kulp D."/>
            <person name="Lai Z."/>
            <person name="Lasko P."/>
            <person name="Lei Y."/>
            <person name="Levitsky A.A."/>
            <person name="Li J.H."/>
            <person name="Li Z."/>
            <person name="Liang Y."/>
            <person name="Lin X."/>
            <person name="Liu X."/>
            <person name="Mattei B."/>
            <person name="McIntosh T.C."/>
            <person name="McLeod M.P."/>
            <person name="McPherson D."/>
            <person name="Merkulov G."/>
            <person name="Milshina N.V."/>
            <person name="Mobarry C."/>
            <person name="Morris J."/>
            <person name="Moshrefi A."/>
            <person name="Mount S.M."/>
            <person name="Moy M."/>
            <person name="Murphy B."/>
            <person name="Murphy L."/>
            <person name="Muzny D.M."/>
            <person name="Nelson D.L."/>
            <person name="Nelson D.R."/>
            <person name="Nelson K.A."/>
            <person name="Nixon K."/>
            <person name="Nusskern D.R."/>
            <person name="Pacleb J.M."/>
            <person name="Palazzolo M."/>
            <person name="Pittman G.S."/>
            <person name="Pan S."/>
            <person name="Pollard J."/>
            <person name="Puri V."/>
            <person name="Reese M.G."/>
            <person name="Reinert K."/>
            <person name="Remington K."/>
            <person name="Saunders R.D.C."/>
            <person name="Scheeler F."/>
            <person name="Shen H."/>
            <person name="Shue B.C."/>
            <person name="Siden-Kiamos I."/>
            <person name="Simpson M."/>
            <person name="Skupski M.P."/>
            <person name="Smith T.J."/>
            <person name="Spier E."/>
            <person name="Spradling A.C."/>
            <person name="Stapleton M."/>
            <person name="Strong R."/>
            <person name="Sun E."/>
            <person name="Svirskas R."/>
            <person name="Tector C."/>
            <person name="Turner R."/>
            <person name="Venter E."/>
            <person name="Wang A.H."/>
            <person name="Wang X."/>
            <person name="Wang Z.-Y."/>
            <person name="Wassarman D.A."/>
            <person name="Weinstock G.M."/>
            <person name="Weissenbach J."/>
            <person name="Williams S.M."/>
            <person name="Woodage T."/>
            <person name="Worley K.C."/>
            <person name="Wu D."/>
            <person name="Yang S."/>
            <person name="Yao Q.A."/>
            <person name="Ye J."/>
            <person name="Yeh R.-F."/>
            <person name="Zaveri J.S."/>
            <person name="Zhan M."/>
            <person name="Zhang G."/>
            <person name="Zhao Q."/>
            <person name="Zheng L."/>
            <person name="Zheng X.H."/>
            <person name="Zhong F.N."/>
            <person name="Zhong W."/>
            <person name="Zhou X."/>
            <person name="Zhu S.C."/>
            <person name="Zhu X."/>
            <person name="Smith H.O."/>
            <person name="Gibbs R.A."/>
            <person name="Myers E.W."/>
            <person name="Rubin G.M."/>
            <person name="Venter J.C."/>
        </authorList>
    </citation>
    <scope>NUCLEOTIDE SEQUENCE [LARGE SCALE GENOMIC DNA]</scope>
    <source>
        <strain>Berkeley</strain>
    </source>
</reference>
<reference key="2">
    <citation type="journal article" date="2002" name="Genome Biol.">
        <title>Annotation of the Drosophila melanogaster euchromatic genome: a systematic review.</title>
        <authorList>
            <person name="Misra S."/>
            <person name="Crosby M.A."/>
            <person name="Mungall C.J."/>
            <person name="Matthews B.B."/>
            <person name="Campbell K.S."/>
            <person name="Hradecky P."/>
            <person name="Huang Y."/>
            <person name="Kaminker J.S."/>
            <person name="Millburn G.H."/>
            <person name="Prochnik S.E."/>
            <person name="Smith C.D."/>
            <person name="Tupy J.L."/>
            <person name="Whitfield E.J."/>
            <person name="Bayraktaroglu L."/>
            <person name="Berman B.P."/>
            <person name="Bettencourt B.R."/>
            <person name="Celniker S.E."/>
            <person name="de Grey A.D.N.J."/>
            <person name="Drysdale R.A."/>
            <person name="Harris N.L."/>
            <person name="Richter J."/>
            <person name="Russo S."/>
            <person name="Schroeder A.J."/>
            <person name="Shu S.Q."/>
            <person name="Stapleton M."/>
            <person name="Yamada C."/>
            <person name="Ashburner M."/>
            <person name="Gelbart W.M."/>
            <person name="Rubin G.M."/>
            <person name="Lewis S.E."/>
        </authorList>
    </citation>
    <scope>GENOME REANNOTATION</scope>
    <source>
        <strain>Berkeley</strain>
    </source>
</reference>
<reference key="3">
    <citation type="submission" date="2007-12" db="EMBL/GenBank/DDBJ databases">
        <authorList>
            <person name="Stapleton M."/>
            <person name="Carlson J.W."/>
            <person name="Frise E."/>
            <person name="Kapadia B."/>
            <person name="Park S."/>
            <person name="Wan K.H."/>
            <person name="Yu C."/>
            <person name="Celniker S.E."/>
        </authorList>
    </citation>
    <scope>NUCLEOTIDE SEQUENCE [LARGE SCALE MRNA]</scope>
    <source>
        <strain>Berkeley</strain>
        <tissue>Embryo</tissue>
    </source>
</reference>
<sequence>MNKQVIFGLLLACILVCISGQDEEDYQESPTVLIALLVRNKAHILPMFLSYLEQQDYPKERIAIWLRCDHSNDDSIELLRQWLDNSGDLYHSVSYEFKPEEQSFVNGTSPYEWPASRFKHLIALKEEAFQYGRDIWADYVFFLDADVLLTSKDSLKVLTRLQLPIVAPMLISESLYSNFWCGMTEDYYYRRTDEYKEIYHVKKQGSFPVPMVHTAVLVNMNHRAVRNLTFDRNKLVELQKSRQQEPLYDGPADDIIVFAISANSSGIPLHICNDITFGYILQPLEPGDTLDHDVQQLVNLKSIMVNELGAVPPLLDYYKHLEKKPEKSKLSLDRIFMINLKRRPERREKMERLFDEIGIEAEHFPAVDGKELSTERLLEMGVRFLPGYEDPYHHRAMTMGEIGCFLSHYNIWVMMVRKQLKEVLILEDDIRFEPYFRQNAVRILNQARNAAQYDLIYFGRKRLKEESEPAVENADNLVHAGYSYWTLGYVISLQGALKLLAAKPLDKLIPVDEFLPLMFDRHPNKTWTEAFPKRNLVAFSASPLLLYPIYYTGESGYISDTEDSQQISVETSEEGEARLKSDREQVFDHEQEFKLNPELKLGESLSKSHQEL</sequence>
<proteinExistence type="evidence at transcript level"/>
<dbReference type="EC" id="2.-.-.-"/>
<dbReference type="EMBL" id="AE014134">
    <property type="protein sequence ID" value="AAN10543.1"/>
    <property type="molecule type" value="Genomic_DNA"/>
</dbReference>
<dbReference type="EMBL" id="BT031322">
    <property type="protein sequence ID" value="ABY21735.1"/>
    <property type="status" value="ALT_INIT"/>
    <property type="molecule type" value="mRNA"/>
</dbReference>
<dbReference type="RefSeq" id="NP_723087.1">
    <property type="nucleotide sequence ID" value="NM_164645.3"/>
</dbReference>
<dbReference type="SMR" id="Q8IPK4"/>
<dbReference type="FunCoup" id="Q8IPK4">
    <property type="interactions" value="383"/>
</dbReference>
<dbReference type="IntAct" id="Q8IPK4">
    <property type="interactions" value="13"/>
</dbReference>
<dbReference type="STRING" id="7227.FBpp0078732"/>
<dbReference type="CAZy" id="GT25">
    <property type="family name" value="Glycosyltransferase Family 25"/>
</dbReference>
<dbReference type="GlyGen" id="Q8IPK4">
    <property type="glycosylation" value="4 sites"/>
</dbReference>
<dbReference type="PaxDb" id="7227-FBpp0078732"/>
<dbReference type="DNASU" id="319025"/>
<dbReference type="EnsemblMetazoa" id="FBtr0079099">
    <property type="protein sequence ID" value="FBpp0078732"/>
    <property type="gene ID" value="FBgn0051915"/>
</dbReference>
<dbReference type="GeneID" id="319025"/>
<dbReference type="KEGG" id="dme:Dmel_CG31915"/>
<dbReference type="UCSC" id="CG31915-RA">
    <property type="organism name" value="d. melanogaster"/>
</dbReference>
<dbReference type="AGR" id="FB:FBgn0051915"/>
<dbReference type="FlyBase" id="FBgn0051915">
    <property type="gene designation" value="CG31915"/>
</dbReference>
<dbReference type="VEuPathDB" id="VectorBase:FBgn0051915"/>
<dbReference type="eggNOG" id="KOG2540">
    <property type="taxonomic scope" value="Eukaryota"/>
</dbReference>
<dbReference type="eggNOG" id="KOG4179">
    <property type="taxonomic scope" value="Eukaryota"/>
</dbReference>
<dbReference type="GeneTree" id="ENSGT01030000234558"/>
<dbReference type="HOGENOM" id="CLU_024037_2_0_1"/>
<dbReference type="InParanoid" id="Q8IPK4"/>
<dbReference type="OMA" id="QRVYHYV"/>
<dbReference type="OrthoDB" id="47375at2759"/>
<dbReference type="PhylomeDB" id="Q8IPK4"/>
<dbReference type="Reactome" id="R-DME-1650814">
    <property type="pathway name" value="Collagen biosynthesis and modifying enzymes"/>
</dbReference>
<dbReference type="BioGRID-ORCS" id="319025">
    <property type="hits" value="0 hits in 3 CRISPR screens"/>
</dbReference>
<dbReference type="GenomeRNAi" id="319025"/>
<dbReference type="PRO" id="PR:Q8IPK4"/>
<dbReference type="Proteomes" id="UP000000803">
    <property type="component" value="Chromosome 2L"/>
</dbReference>
<dbReference type="Bgee" id="FBgn0051915">
    <property type="expression patterns" value="Expressed in embryonic/larval hemocyte (Drosophila) and 47 other cell types or tissues"/>
</dbReference>
<dbReference type="GO" id="GO:0005788">
    <property type="term" value="C:endoplasmic reticulum lumen"/>
    <property type="evidence" value="ECO:0000250"/>
    <property type="project" value="FlyBase"/>
</dbReference>
<dbReference type="GO" id="GO:0050211">
    <property type="term" value="F:procollagen galactosyltransferase activity"/>
    <property type="evidence" value="ECO:0000250"/>
    <property type="project" value="FlyBase"/>
</dbReference>
<dbReference type="GO" id="GO:1904028">
    <property type="term" value="P:positive regulation of collagen fibril organization"/>
    <property type="evidence" value="ECO:0000250"/>
    <property type="project" value="FlyBase"/>
</dbReference>
<dbReference type="GO" id="GO:0006493">
    <property type="term" value="P:protein O-linked glycosylation"/>
    <property type="evidence" value="ECO:0000250"/>
    <property type="project" value="FlyBase"/>
</dbReference>
<dbReference type="CDD" id="cd06532">
    <property type="entry name" value="Glyco_transf_25"/>
    <property type="match status" value="1"/>
</dbReference>
<dbReference type="Gene3D" id="3.90.550.10">
    <property type="entry name" value="Spore Coat Polysaccharide Biosynthesis Protein SpsA, Chain A"/>
    <property type="match status" value="1"/>
</dbReference>
<dbReference type="InterPro" id="IPR050757">
    <property type="entry name" value="Collagen_mod_GT25"/>
</dbReference>
<dbReference type="InterPro" id="IPR002654">
    <property type="entry name" value="Glyco_trans_25"/>
</dbReference>
<dbReference type="InterPro" id="IPR029044">
    <property type="entry name" value="Nucleotide-diphossugar_trans"/>
</dbReference>
<dbReference type="PANTHER" id="PTHR10730:SF53">
    <property type="entry name" value="GLYCOSYLTRANSFERASE 25 FAMILY MEMBER"/>
    <property type="match status" value="1"/>
</dbReference>
<dbReference type="PANTHER" id="PTHR10730">
    <property type="entry name" value="PROCOLLAGEN-LYSINE,2-OXOGLUTARATE 5-DIOXYGENASE/GLYCOSYLTRANSFERASE 25 FAMILY MEMBER"/>
    <property type="match status" value="1"/>
</dbReference>
<dbReference type="Pfam" id="PF01755">
    <property type="entry name" value="Glyco_transf_25"/>
    <property type="match status" value="1"/>
</dbReference>
<dbReference type="SUPFAM" id="SSF53448">
    <property type="entry name" value="Nucleotide-diphospho-sugar transferases"/>
    <property type="match status" value="1"/>
</dbReference>
<dbReference type="PROSITE" id="PS00014">
    <property type="entry name" value="ER_TARGET"/>
    <property type="match status" value="1"/>
</dbReference>
<evidence type="ECO:0000255" key="1"/>
<evidence type="ECO:0000255" key="2">
    <source>
        <dbReference type="PROSITE-ProRule" id="PRU10138"/>
    </source>
</evidence>
<evidence type="ECO:0000305" key="3"/>
<protein>
    <recommendedName>
        <fullName>Glycosyltransferase 25 family member</fullName>
        <ecNumber>2.-.-.-</ecNumber>
    </recommendedName>
</protein>
<feature type="signal peptide" evidence="1">
    <location>
        <begin position="1"/>
        <end position="20"/>
    </location>
</feature>
<feature type="chain" id="PRO_0000309549" description="Glycosyltransferase 25 family member">
    <location>
        <begin position="21"/>
        <end position="612"/>
    </location>
</feature>
<feature type="short sequence motif" description="Prevents secretion from ER" evidence="2">
    <location>
        <begin position="609"/>
        <end position="612"/>
    </location>
</feature>
<feature type="glycosylation site" description="N-linked (GlcNAc...) asparagine" evidence="1">
    <location>
        <position position="106"/>
    </location>
</feature>
<feature type="glycosylation site" description="N-linked (GlcNAc...) asparagine" evidence="1">
    <location>
        <position position="227"/>
    </location>
</feature>
<feature type="glycosylation site" description="N-linked (GlcNAc...) asparagine" evidence="1">
    <location>
        <position position="263"/>
    </location>
</feature>
<feature type="glycosylation site" description="N-linked (GlcNAc...) asparagine" evidence="1">
    <location>
        <position position="524"/>
    </location>
</feature>
<name>GLT25_DROME</name>
<comment type="subcellular location">
    <subcellularLocation>
        <location evidence="2">Endoplasmic reticulum lumen</location>
    </subcellularLocation>
</comment>
<comment type="similarity">
    <text evidence="3">Belongs to the glycosyltransferase 25 family.</text>
</comment>
<comment type="sequence caution" evidence="3">
    <conflict type="erroneous initiation">
        <sequence resource="EMBL-CDS" id="ABY21735"/>
    </conflict>
</comment>
<gene>
    <name type="ORF">CG31915</name>
</gene>
<organism>
    <name type="scientific">Drosophila melanogaster</name>
    <name type="common">Fruit fly</name>
    <dbReference type="NCBI Taxonomy" id="7227"/>
    <lineage>
        <taxon>Eukaryota</taxon>
        <taxon>Metazoa</taxon>
        <taxon>Ecdysozoa</taxon>
        <taxon>Arthropoda</taxon>
        <taxon>Hexapoda</taxon>
        <taxon>Insecta</taxon>
        <taxon>Pterygota</taxon>
        <taxon>Neoptera</taxon>
        <taxon>Endopterygota</taxon>
        <taxon>Diptera</taxon>
        <taxon>Brachycera</taxon>
        <taxon>Muscomorpha</taxon>
        <taxon>Ephydroidea</taxon>
        <taxon>Drosophilidae</taxon>
        <taxon>Drosophila</taxon>
        <taxon>Sophophora</taxon>
    </lineage>
</organism>
<keyword id="KW-0256">Endoplasmic reticulum</keyword>
<keyword id="KW-0325">Glycoprotein</keyword>
<keyword id="KW-0328">Glycosyltransferase</keyword>
<keyword id="KW-1185">Reference proteome</keyword>
<keyword id="KW-0732">Signal</keyword>
<keyword id="KW-0808">Transferase</keyword>